<accession>P75537</accession>
<name>Y234_MYCPN</name>
<dbReference type="EMBL" id="U00089">
    <property type="protein sequence ID" value="AAB96245.1"/>
    <property type="molecule type" value="Genomic_DNA"/>
</dbReference>
<dbReference type="PIR" id="S73923">
    <property type="entry name" value="S73923"/>
</dbReference>
<dbReference type="SMR" id="P75537"/>
<dbReference type="STRING" id="272634.MPN_234"/>
<dbReference type="EnsemblBacteria" id="AAB96245">
    <property type="protein sequence ID" value="AAB96245"/>
    <property type="gene ID" value="MPN_234"/>
</dbReference>
<dbReference type="KEGG" id="mpn:MPN_234"/>
<dbReference type="HOGENOM" id="CLU_029253_0_0_14"/>
<dbReference type="Proteomes" id="UP000000808">
    <property type="component" value="Chromosome"/>
</dbReference>
<dbReference type="InterPro" id="IPR004306">
    <property type="entry name" value="DUF237"/>
</dbReference>
<dbReference type="InterPro" id="IPR004319">
    <property type="entry name" value="DUF240"/>
</dbReference>
<dbReference type="Pfam" id="PF03072">
    <property type="entry name" value="DUF237"/>
    <property type="match status" value="1"/>
</dbReference>
<dbReference type="Pfam" id="PF03086">
    <property type="entry name" value="DUF240"/>
    <property type="match status" value="1"/>
</dbReference>
<feature type="chain" id="PRO_0000215254" description="Uncharacterized protein MPN_234">
    <location>
        <begin position="1"/>
        <end position="417"/>
    </location>
</feature>
<protein>
    <recommendedName>
        <fullName>Uncharacterized protein MPN_234</fullName>
    </recommendedName>
</protein>
<gene>
    <name type="ordered locus">MPN_234</name>
    <name type="ORF">G07_orf417</name>
    <name type="ORF">MP597</name>
</gene>
<proteinExistence type="inferred from homology"/>
<keyword id="KW-1185">Reference proteome</keyword>
<sequence length="417" mass="47650">MQFHAVYQNNDTKANLDFALNISTINFATLQELQNSFDLQGSDLTAGLFYKYSVNKLTSGTNDLTTIAKTALGENIIQKQVSLTQSIIKPRLEAAKTQYKQDIIAPFAKERQAALAQHLKEIEEAKQRAEQLLKEQQEAEKRRQEEVKNVAETQQFNDSLTSAQKFKEYWLKQGKDVTKKVELIQALKSSFFRNQNRTFNFLIAGFRTAIDWYYNQEKNNTTAKNNAFGKNGIQFPVAGFQGIYMSQWLRDELSGKTDIKLNLKSLSVQNENKNSSINWNKQKRIEIKQVKPFNYSFEINLKYTGSYNVSLWYLIGAAIGGIPTSWSGTMDMKFIVDGDLDSGIVTKQDYPGSKFEFTEDKLWFTLHVKQQIKVKEQGFMNLLKGQSLDNLDLRTGTTKPPVVDLASYLHFVILTAK</sequence>
<organism>
    <name type="scientific">Mycoplasma pneumoniae (strain ATCC 29342 / M129 / Subtype 1)</name>
    <name type="common">Mycoplasmoides pneumoniae</name>
    <dbReference type="NCBI Taxonomy" id="272634"/>
    <lineage>
        <taxon>Bacteria</taxon>
        <taxon>Bacillati</taxon>
        <taxon>Mycoplasmatota</taxon>
        <taxon>Mycoplasmoidales</taxon>
        <taxon>Mycoplasmoidaceae</taxon>
        <taxon>Mycoplasmoides</taxon>
    </lineage>
</organism>
<comment type="similarity">
    <text evidence="1">Belongs to the MG032/MG096/MG288 family.</text>
</comment>
<reference key="1">
    <citation type="journal article" date="1996" name="Nucleic Acids Res.">
        <title>Complete sequence analysis of the genome of the bacterium Mycoplasma pneumoniae.</title>
        <authorList>
            <person name="Himmelreich R."/>
            <person name="Hilbert H."/>
            <person name="Plagens H."/>
            <person name="Pirkl E."/>
            <person name="Li B.-C."/>
            <person name="Herrmann R."/>
        </authorList>
    </citation>
    <scope>NUCLEOTIDE SEQUENCE [LARGE SCALE GENOMIC DNA]</scope>
    <source>
        <strain>ATCC 29342 / M129 / Subtype 1</strain>
    </source>
</reference>
<evidence type="ECO:0000305" key="1"/>